<accession>Q5LI95</accession>
<sequence length="493" mass="56068">MEKKLKSWQGWLLFCGAMAVVFVLGLVVSSLMERRAETVSVFNNKRVEITGIEARNEVFGENYPRQYETWKETAKTDFKSEFNGNEAVDVLEQRPEMVVLWAGYAFSKDYSTPRGHMHAIEDITHSLRTGAPMDDKSGPQPSTCWTCKSPDVPRMMEAIGVDSFYNNKWGAFGSEIVNPIGCADCHEPTNMKLHISRPALREAFARQGKDIDKATPQEMRSLVCAQCHVEYYFKGDGKYLTFPWDKGFSVEDMEAYYDEADFADYTHALSKARILKAQHPDYEISQMGIHAQRGVSCADCHMPYKSEGGMKFSDHHIQSPLAMIDRTCQVCHRESEETLRNNVYDRQRKANEIRGRLEQELAKAHIEAKFAWDKGATDVQMAEALKLIRQAQWRWDFGVASHGGAFHAPQEIQRILGHGLDKALQARLAISKVLAQHGYTADVPMPDISTKEKAQEYIGLDMEKERKAKDKFLKTIVPEWLEKARANGRLAKL</sequence>
<reference key="1">
    <citation type="journal article" date="2005" name="Science">
        <title>Extensive DNA inversions in the B. fragilis genome control variable gene expression.</title>
        <authorList>
            <person name="Cerdeno-Tarraga A.-M."/>
            <person name="Patrick S."/>
            <person name="Crossman L.C."/>
            <person name="Blakely G."/>
            <person name="Abratt V."/>
            <person name="Lennard N."/>
            <person name="Poxton I."/>
            <person name="Duerden B."/>
            <person name="Harris B."/>
            <person name="Quail M.A."/>
            <person name="Barron A."/>
            <person name="Clark L."/>
            <person name="Corton C."/>
            <person name="Doggett J."/>
            <person name="Holden M.T.G."/>
            <person name="Larke N."/>
            <person name="Line A."/>
            <person name="Lord A."/>
            <person name="Norbertczak H."/>
            <person name="Ormond D."/>
            <person name="Price C."/>
            <person name="Rabbinowitsch E."/>
            <person name="Woodward J."/>
            <person name="Barrell B.G."/>
            <person name="Parkhill J."/>
        </authorList>
    </citation>
    <scope>NUCLEOTIDE SEQUENCE [LARGE SCALE GENOMIC DNA]</scope>
    <source>
        <strain>ATCC 25285 / DSM 2151 / CCUG 4856 / JCM 11019 / LMG 10263 / NCTC 9343 / Onslow / VPI 2553 / EN-2</strain>
    </source>
</reference>
<proteinExistence type="inferred from homology"/>
<organism>
    <name type="scientific">Bacteroides fragilis (strain ATCC 25285 / DSM 2151 / CCUG 4856 / JCM 11019 / LMG 10263 / NCTC 9343 / Onslow / VPI 2553 / EN-2)</name>
    <dbReference type="NCBI Taxonomy" id="272559"/>
    <lineage>
        <taxon>Bacteria</taxon>
        <taxon>Pseudomonadati</taxon>
        <taxon>Bacteroidota</taxon>
        <taxon>Bacteroidia</taxon>
        <taxon>Bacteroidales</taxon>
        <taxon>Bacteroidaceae</taxon>
        <taxon>Bacteroides</taxon>
    </lineage>
</organism>
<gene>
    <name evidence="1" type="primary">nrfA</name>
    <name type="ordered locus">BF0361</name>
</gene>
<comment type="function">
    <text evidence="1">Catalyzes the reduction of nitrite to ammonia, consuming six electrons in the process.</text>
</comment>
<comment type="catalytic activity">
    <reaction evidence="1">
        <text>6 Fe(III)-[cytochrome c] + NH4(+) + 2 H2O = 6 Fe(II)-[cytochrome c] + nitrite + 8 H(+)</text>
        <dbReference type="Rhea" id="RHEA:13089"/>
        <dbReference type="Rhea" id="RHEA-COMP:10350"/>
        <dbReference type="Rhea" id="RHEA-COMP:14399"/>
        <dbReference type="ChEBI" id="CHEBI:15377"/>
        <dbReference type="ChEBI" id="CHEBI:15378"/>
        <dbReference type="ChEBI" id="CHEBI:16301"/>
        <dbReference type="ChEBI" id="CHEBI:28938"/>
        <dbReference type="ChEBI" id="CHEBI:29033"/>
        <dbReference type="ChEBI" id="CHEBI:29034"/>
        <dbReference type="EC" id="1.7.2.2"/>
    </reaction>
</comment>
<comment type="cofactor">
    <cofactor evidence="1">
        <name>Ca(2+)</name>
        <dbReference type="ChEBI" id="CHEBI:29108"/>
    </cofactor>
    <text evidence="1">Binds 1 Ca(2+) ion per monomer.</text>
</comment>
<comment type="cofactor">
    <cofactor evidence="1">
        <name>heme c</name>
        <dbReference type="ChEBI" id="CHEBI:61717"/>
    </cofactor>
    <text evidence="1">Binds 5 heme c groups covalently per monomer.</text>
</comment>
<comment type="pathway">
    <text evidence="1">Nitrogen metabolism; nitrate reduction (assimilation).</text>
</comment>
<comment type="subcellular location">
    <subcellularLocation>
        <location evidence="1">Periplasm</location>
    </subcellularLocation>
</comment>
<comment type="similarity">
    <text evidence="1">Belongs to the cytochrome c-552 family.</text>
</comment>
<evidence type="ECO:0000255" key="1">
    <source>
        <dbReference type="HAMAP-Rule" id="MF_01182"/>
    </source>
</evidence>
<protein>
    <recommendedName>
        <fullName evidence="1">Cytochrome c-552</fullName>
        <ecNumber evidence="1">1.7.2.2</ecNumber>
    </recommendedName>
    <alternativeName>
        <fullName evidence="1">Ammonia-forming cytochrome c nitrite reductase</fullName>
        <shortName evidence="1">Cytochrome c nitrite reductase</shortName>
    </alternativeName>
</protein>
<feature type="signal peptide" evidence="1">
    <location>
        <begin position="1"/>
        <end position="25"/>
    </location>
</feature>
<feature type="chain" id="PRO_0000268959" description="Cytochrome c-552">
    <location>
        <begin position="26"/>
        <end position="493"/>
    </location>
</feature>
<feature type="binding site" description="axial binding residue" evidence="1">
    <location>
        <position position="116"/>
    </location>
    <ligand>
        <name>heme c</name>
        <dbReference type="ChEBI" id="CHEBI:61717"/>
        <label>3</label>
    </ligand>
    <ligandPart>
        <name>Fe</name>
        <dbReference type="ChEBI" id="CHEBI:18248"/>
    </ligandPart>
</feature>
<feature type="binding site" description="covalent" evidence="1">
    <location>
        <position position="144"/>
    </location>
    <ligand>
        <name>heme</name>
        <dbReference type="ChEBI" id="CHEBI:30413"/>
        <label>1</label>
    </ligand>
</feature>
<feature type="binding site" description="covalent" evidence="1">
    <location>
        <position position="147"/>
    </location>
    <ligand>
        <name>heme</name>
        <dbReference type="ChEBI" id="CHEBI:30413"/>
        <label>1</label>
    </ligand>
</feature>
<feature type="binding site" description="axial binding residue" evidence="1">
    <location>
        <position position="148"/>
    </location>
    <ligand>
        <name>heme</name>
        <dbReference type="ChEBI" id="CHEBI:30413"/>
        <label>1</label>
    </ligand>
    <ligandPart>
        <name>Fe</name>
        <dbReference type="ChEBI" id="CHEBI:18248"/>
    </ligandPart>
</feature>
<feature type="binding site" description="covalent" evidence="1">
    <location>
        <position position="182"/>
    </location>
    <ligand>
        <name>heme c</name>
        <dbReference type="ChEBI" id="CHEBI:61717"/>
        <label>2</label>
    </ligand>
</feature>
<feature type="binding site" description="covalent" evidence="1">
    <location>
        <position position="185"/>
    </location>
    <ligand>
        <name>heme c</name>
        <dbReference type="ChEBI" id="CHEBI:61717"/>
        <label>2</label>
    </ligand>
</feature>
<feature type="binding site" description="axial binding residue" evidence="1">
    <location>
        <position position="186"/>
    </location>
    <ligand>
        <name>heme c</name>
        <dbReference type="ChEBI" id="CHEBI:61717"/>
        <label>2</label>
    </ligand>
    <ligandPart>
        <name>Fe</name>
        <dbReference type="ChEBI" id="CHEBI:18248"/>
    </ligandPart>
</feature>
<feature type="binding site" description="covalent" evidence="1">
    <location>
        <position position="224"/>
    </location>
    <ligand>
        <name>heme c</name>
        <dbReference type="ChEBI" id="CHEBI:61717"/>
        <label>3</label>
    </ligand>
</feature>
<feature type="binding site" description="covalent" evidence="1">
    <location>
        <position position="227"/>
    </location>
    <ligand>
        <name>heme c</name>
        <dbReference type="ChEBI" id="CHEBI:61717"/>
        <label>3</label>
    </ligand>
</feature>
<feature type="binding site" description="axial binding residue" evidence="1">
    <location>
        <position position="228"/>
    </location>
    <ligand>
        <name>heme c</name>
        <dbReference type="ChEBI" id="CHEBI:61717"/>
        <label>3</label>
    </ligand>
    <ligandPart>
        <name>Fe</name>
        <dbReference type="ChEBI" id="CHEBI:18248"/>
    </ligandPart>
</feature>
<feature type="binding site" evidence="1">
    <location>
        <position position="230"/>
    </location>
    <ligand>
        <name>Ca(2+)</name>
        <dbReference type="ChEBI" id="CHEBI:29108"/>
    </ligand>
</feature>
<feature type="binding site" evidence="1">
    <location>
        <position position="231"/>
    </location>
    <ligand>
        <name>Ca(2+)</name>
        <dbReference type="ChEBI" id="CHEBI:29108"/>
    </ligand>
</feature>
<feature type="binding site" evidence="1">
    <location>
        <position position="231"/>
    </location>
    <ligand>
        <name>substrate</name>
    </ligand>
</feature>
<feature type="binding site" evidence="1">
    <location>
        <position position="276"/>
    </location>
    <ligand>
        <name>Ca(2+)</name>
        <dbReference type="ChEBI" id="CHEBI:29108"/>
    </ligand>
</feature>
<feature type="binding site" evidence="1">
    <location>
        <position position="278"/>
    </location>
    <ligand>
        <name>Ca(2+)</name>
        <dbReference type="ChEBI" id="CHEBI:29108"/>
    </ligand>
</feature>
<feature type="binding site" evidence="1">
    <location>
        <position position="279"/>
    </location>
    <ligand>
        <name>substrate</name>
    </ligand>
</feature>
<feature type="binding site" description="axial binding residue" evidence="1">
    <location>
        <position position="290"/>
    </location>
    <ligand>
        <name>heme c</name>
        <dbReference type="ChEBI" id="CHEBI:61717"/>
        <label>5</label>
    </ligand>
    <ligandPart>
        <name>Fe</name>
        <dbReference type="ChEBI" id="CHEBI:18248"/>
    </ligandPart>
</feature>
<feature type="binding site" description="covalent" evidence="1">
    <location>
        <position position="297"/>
    </location>
    <ligand>
        <name>heme c</name>
        <dbReference type="ChEBI" id="CHEBI:61717"/>
        <label>4</label>
    </ligand>
</feature>
<feature type="binding site" description="covalent" evidence="1">
    <location>
        <position position="300"/>
    </location>
    <ligand>
        <name>heme c</name>
        <dbReference type="ChEBI" id="CHEBI:61717"/>
        <label>4</label>
    </ligand>
</feature>
<feature type="binding site" description="axial binding residue" evidence="1">
    <location>
        <position position="301"/>
    </location>
    <ligand>
        <name>heme c</name>
        <dbReference type="ChEBI" id="CHEBI:61717"/>
        <label>4</label>
    </ligand>
    <ligandPart>
        <name>Fe</name>
        <dbReference type="ChEBI" id="CHEBI:18248"/>
    </ligandPart>
</feature>
<feature type="binding site" description="axial binding residue" evidence="1">
    <location>
        <position position="315"/>
    </location>
    <ligand>
        <name>heme c</name>
        <dbReference type="ChEBI" id="CHEBI:61717"/>
        <label>2</label>
    </ligand>
    <ligandPart>
        <name>Fe</name>
        <dbReference type="ChEBI" id="CHEBI:18248"/>
    </ligandPart>
</feature>
<feature type="binding site" description="covalent" evidence="1">
    <location>
        <position position="328"/>
    </location>
    <ligand>
        <name>heme c</name>
        <dbReference type="ChEBI" id="CHEBI:61717"/>
        <label>5</label>
    </ligand>
</feature>
<feature type="binding site" description="covalent" evidence="1">
    <location>
        <position position="331"/>
    </location>
    <ligand>
        <name>heme c</name>
        <dbReference type="ChEBI" id="CHEBI:61717"/>
        <label>5</label>
    </ligand>
</feature>
<feature type="binding site" description="axial binding residue" evidence="1">
    <location>
        <position position="332"/>
    </location>
    <ligand>
        <name>heme c</name>
        <dbReference type="ChEBI" id="CHEBI:61717"/>
        <label>5</label>
    </ligand>
    <ligandPart>
        <name>Fe</name>
        <dbReference type="ChEBI" id="CHEBI:18248"/>
    </ligandPart>
</feature>
<feature type="binding site" description="axial binding residue" evidence="1">
    <location>
        <position position="407"/>
    </location>
    <ligand>
        <name>heme c</name>
        <dbReference type="ChEBI" id="CHEBI:61717"/>
        <label>4</label>
    </ligand>
    <ligandPart>
        <name>Fe</name>
        <dbReference type="ChEBI" id="CHEBI:18248"/>
    </ligandPart>
</feature>
<dbReference type="EC" id="1.7.2.2" evidence="1"/>
<dbReference type="EMBL" id="CR626927">
    <property type="protein sequence ID" value="CAH06131.1"/>
    <property type="molecule type" value="Genomic_DNA"/>
</dbReference>
<dbReference type="RefSeq" id="WP_005796615.1">
    <property type="nucleotide sequence ID" value="NZ_UFTH01000001.1"/>
</dbReference>
<dbReference type="SMR" id="Q5LI95"/>
<dbReference type="PaxDb" id="272559-BF9343_0352"/>
<dbReference type="GeneID" id="60369404"/>
<dbReference type="KEGG" id="bfs:BF9343_0352"/>
<dbReference type="eggNOG" id="COG3303">
    <property type="taxonomic scope" value="Bacteria"/>
</dbReference>
<dbReference type="HOGENOM" id="CLU_035040_1_0_10"/>
<dbReference type="UniPathway" id="UPA00653"/>
<dbReference type="Proteomes" id="UP000006731">
    <property type="component" value="Chromosome"/>
</dbReference>
<dbReference type="GO" id="GO:0030288">
    <property type="term" value="C:outer membrane-bounded periplasmic space"/>
    <property type="evidence" value="ECO:0007669"/>
    <property type="project" value="TreeGrafter"/>
</dbReference>
<dbReference type="GO" id="GO:0005509">
    <property type="term" value="F:calcium ion binding"/>
    <property type="evidence" value="ECO:0007669"/>
    <property type="project" value="UniProtKB-UniRule"/>
</dbReference>
<dbReference type="GO" id="GO:0020037">
    <property type="term" value="F:heme binding"/>
    <property type="evidence" value="ECO:0007669"/>
    <property type="project" value="InterPro"/>
</dbReference>
<dbReference type="GO" id="GO:0005506">
    <property type="term" value="F:iron ion binding"/>
    <property type="evidence" value="ECO:0007669"/>
    <property type="project" value="UniProtKB-UniRule"/>
</dbReference>
<dbReference type="GO" id="GO:0042279">
    <property type="term" value="F:nitrite reductase (cytochrome, ammonia-forming) activity"/>
    <property type="evidence" value="ECO:0007669"/>
    <property type="project" value="UniProtKB-UniRule"/>
</dbReference>
<dbReference type="GO" id="GO:0019645">
    <property type="term" value="P:anaerobic electron transport chain"/>
    <property type="evidence" value="ECO:0007669"/>
    <property type="project" value="TreeGrafter"/>
</dbReference>
<dbReference type="GO" id="GO:0042128">
    <property type="term" value="P:nitrate assimilation"/>
    <property type="evidence" value="ECO:0007669"/>
    <property type="project" value="UniProtKB-UniRule"/>
</dbReference>
<dbReference type="CDD" id="cd00548">
    <property type="entry name" value="NrfA-like"/>
    <property type="match status" value="1"/>
</dbReference>
<dbReference type="FunFam" id="1.20.140.10:FF:000014">
    <property type="entry name" value="Cytochrome c-552"/>
    <property type="match status" value="1"/>
</dbReference>
<dbReference type="Gene3D" id="1.20.140.10">
    <property type="entry name" value="Butyryl-CoA Dehydrogenase, subunit A, domain 3"/>
    <property type="match status" value="1"/>
</dbReference>
<dbReference type="Gene3D" id="1.10.1130.10">
    <property type="entry name" value="Flavocytochrome C3, Chain A"/>
    <property type="match status" value="1"/>
</dbReference>
<dbReference type="HAMAP" id="MF_01182">
    <property type="entry name" value="Cytochrom_C552"/>
    <property type="match status" value="1"/>
</dbReference>
<dbReference type="InterPro" id="IPR003321">
    <property type="entry name" value="Cyt_c552"/>
</dbReference>
<dbReference type="InterPro" id="IPR017570">
    <property type="entry name" value="Cyt_c_NO2Rdtase_formate-dep"/>
</dbReference>
<dbReference type="InterPro" id="IPR036280">
    <property type="entry name" value="Multihaem_cyt_sf"/>
</dbReference>
<dbReference type="NCBIfam" id="NF008339">
    <property type="entry name" value="PRK11125.1"/>
    <property type="match status" value="1"/>
</dbReference>
<dbReference type="PANTHER" id="PTHR30633:SF0">
    <property type="entry name" value="CYTOCHROME C-552"/>
    <property type="match status" value="1"/>
</dbReference>
<dbReference type="PANTHER" id="PTHR30633">
    <property type="entry name" value="CYTOCHROME C-552 RESPIRATORY NITRITE REDUCTASE"/>
    <property type="match status" value="1"/>
</dbReference>
<dbReference type="Pfam" id="PF02335">
    <property type="entry name" value="Cytochrom_C552"/>
    <property type="match status" value="1"/>
</dbReference>
<dbReference type="PIRSF" id="PIRSF000243">
    <property type="entry name" value="Cyt_c552"/>
    <property type="match status" value="1"/>
</dbReference>
<dbReference type="SUPFAM" id="SSF48695">
    <property type="entry name" value="Multiheme cytochromes"/>
    <property type="match status" value="1"/>
</dbReference>
<dbReference type="PROSITE" id="PS51008">
    <property type="entry name" value="MULTIHEME_CYTC"/>
    <property type="match status" value="1"/>
</dbReference>
<name>NRFA_BACFN</name>
<keyword id="KW-0106">Calcium</keyword>
<keyword id="KW-0249">Electron transport</keyword>
<keyword id="KW-0349">Heme</keyword>
<keyword id="KW-0408">Iron</keyword>
<keyword id="KW-0479">Metal-binding</keyword>
<keyword id="KW-0560">Oxidoreductase</keyword>
<keyword id="KW-0574">Periplasm</keyword>
<keyword id="KW-0732">Signal</keyword>
<keyword id="KW-0813">Transport</keyword>